<feature type="signal peptide" evidence="1">
    <location>
        <begin position="1"/>
        <end position="29"/>
    </location>
</feature>
<feature type="chain" id="PRO_0000229727" description="GlcNAc-binding protein A">
    <location>
        <begin position="30"/>
        <end position="485"/>
    </location>
</feature>
<feature type="domain" description="Chitin-binding type-4" evidence="1">
    <location>
        <begin position="30"/>
        <end position="200"/>
    </location>
</feature>
<feature type="domain" description="Chitin-binding type-3" evidence="1">
    <location>
        <begin position="437"/>
        <end position="478"/>
    </location>
</feature>
<keyword id="KW-0147">Chitin-binding</keyword>
<keyword id="KW-0964">Secreted</keyword>
<keyword id="KW-0732">Signal</keyword>
<sequence length="485" mass="52894">MKKQPQKTLLAIALSVVSGTAMSHGYVSAVENGVAEARVTLCKFAASTGEKNTNCGAIQYEPQSVEGPDGFPASGPRDGKIASAESALANALDEQTADRWVKHPIQTGAQNFEWTFTANHVTKDWKYYITKPDWNPNQPLARASFDLTPFCVVDGGMVQPPKRVSHTCNVPEREGYQVILAVWDVGDTAASFYNVIDVKFDGDGPALPDWQQGGQIIPTMNLNVGDTVFTRVFDLAGENPAYTTELAINSDALTVANNWSHALAVKINQTQSEIAAGQLNEQNQFVPVYGTNPIFLKSGSNLQRVEIGYKIETPAPEYDVTLSGLASEYQISDVPVTLDLSLQATGDITTELIVYNHHKEPLAFESVAMKDGENKAVSMTLSKSEAGHHMLVTKVLDKDGKLQKQQTSDFMLTETQTPPPSNDYDFVFPDGLSSYTAGTKVLASDGAIYQCKPFPYSGYCVQWTPTATQYQPGTGSHWQMAWDKL</sequence>
<protein>
    <recommendedName>
        <fullName evidence="1">GlcNAc-binding protein A</fullName>
    </recommendedName>
</protein>
<evidence type="ECO:0000255" key="1">
    <source>
        <dbReference type="HAMAP-Rule" id="MF_01905"/>
    </source>
</evidence>
<accession>Q7MEW9</accession>
<proteinExistence type="inferred from homology"/>
<gene>
    <name evidence="1" type="primary">gbpA</name>
    <name type="ordered locus">VVA0551</name>
</gene>
<organism>
    <name type="scientific">Vibrio vulnificus (strain YJ016)</name>
    <dbReference type="NCBI Taxonomy" id="196600"/>
    <lineage>
        <taxon>Bacteria</taxon>
        <taxon>Pseudomonadati</taxon>
        <taxon>Pseudomonadota</taxon>
        <taxon>Gammaproteobacteria</taxon>
        <taxon>Vibrionales</taxon>
        <taxon>Vibrionaceae</taxon>
        <taxon>Vibrio</taxon>
    </lineage>
</organism>
<reference key="1">
    <citation type="journal article" date="2003" name="Genome Res.">
        <title>Comparative genome analysis of Vibrio vulnificus, a marine pathogen.</title>
        <authorList>
            <person name="Chen C.-Y."/>
            <person name="Wu K.-M."/>
            <person name="Chang Y.-C."/>
            <person name="Chang C.-H."/>
            <person name="Tsai H.-C."/>
            <person name="Liao T.-L."/>
            <person name="Liu Y.-M."/>
            <person name="Chen H.-J."/>
            <person name="Shen A.B.-T."/>
            <person name="Li J.-C."/>
            <person name="Su T.-L."/>
            <person name="Shao C.-P."/>
            <person name="Lee C.-T."/>
            <person name="Hor L.-I."/>
            <person name="Tsai S.-F."/>
        </authorList>
    </citation>
    <scope>NUCLEOTIDE SEQUENCE [LARGE SCALE GENOMIC DNA]</scope>
    <source>
        <strain>YJ016</strain>
    </source>
</reference>
<dbReference type="EMBL" id="BA000038">
    <property type="protein sequence ID" value="BAC96577.1"/>
    <property type="molecule type" value="Genomic_DNA"/>
</dbReference>
<dbReference type="RefSeq" id="WP_011151915.1">
    <property type="nucleotide sequence ID" value="NC_005140.1"/>
</dbReference>
<dbReference type="SMR" id="Q7MEW9"/>
<dbReference type="STRING" id="672.VV93_v1c35550"/>
<dbReference type="CAZy" id="AA10">
    <property type="family name" value="Auxiliary Activities 10"/>
</dbReference>
<dbReference type="CAZy" id="CBM73">
    <property type="family name" value="Carbohydrate-Binding Module Family 73"/>
</dbReference>
<dbReference type="KEGG" id="vvy:VVA0551"/>
<dbReference type="PATRIC" id="fig|196600.6.peg.3750"/>
<dbReference type="eggNOG" id="COG3397">
    <property type="taxonomic scope" value="Bacteria"/>
</dbReference>
<dbReference type="HOGENOM" id="CLU_039396_2_0_6"/>
<dbReference type="PHI-base" id="PHI:5560"/>
<dbReference type="Proteomes" id="UP000002675">
    <property type="component" value="Chromosome II"/>
</dbReference>
<dbReference type="GO" id="GO:0005576">
    <property type="term" value="C:extracellular region"/>
    <property type="evidence" value="ECO:0007669"/>
    <property type="project" value="UniProtKB-SubCell"/>
</dbReference>
<dbReference type="GO" id="GO:0008061">
    <property type="term" value="F:chitin binding"/>
    <property type="evidence" value="ECO:0007669"/>
    <property type="project" value="UniProtKB-UniRule"/>
</dbReference>
<dbReference type="CDD" id="cd21177">
    <property type="entry name" value="LPMO_AA10"/>
    <property type="match status" value="1"/>
</dbReference>
<dbReference type="FunFam" id="2.70.50.50:FF:000001">
    <property type="entry name" value="Chitin-binding protein"/>
    <property type="match status" value="1"/>
</dbReference>
<dbReference type="Gene3D" id="2.60.40.2550">
    <property type="match status" value="1"/>
</dbReference>
<dbReference type="Gene3D" id="3.30.70.2150">
    <property type="match status" value="1"/>
</dbReference>
<dbReference type="Gene3D" id="2.70.50.50">
    <property type="entry name" value="chitin-binding protein cbp21"/>
    <property type="match status" value="1"/>
</dbReference>
<dbReference type="HAMAP" id="MF_01905">
    <property type="entry name" value="GbpA"/>
    <property type="match status" value="1"/>
</dbReference>
<dbReference type="InterPro" id="IPR004302">
    <property type="entry name" value="Cellulose/chitin-bd_N"/>
</dbReference>
<dbReference type="InterPro" id="IPR041029">
    <property type="entry name" value="GbpA_2"/>
</dbReference>
<dbReference type="InterPro" id="IPR054063">
    <property type="entry name" value="GbpA_D3"/>
</dbReference>
<dbReference type="InterPro" id="IPR020879">
    <property type="entry name" value="GlcNAc-bd_A"/>
</dbReference>
<dbReference type="InterPro" id="IPR051024">
    <property type="entry name" value="GlcNAc_Chitin_IntDeg"/>
</dbReference>
<dbReference type="InterPro" id="IPR014756">
    <property type="entry name" value="Ig_E-set"/>
</dbReference>
<dbReference type="NCBIfam" id="NF009690">
    <property type="entry name" value="PRK13211.1"/>
    <property type="match status" value="1"/>
</dbReference>
<dbReference type="PANTHER" id="PTHR34823:SF1">
    <property type="entry name" value="CHITIN-BINDING TYPE-4 DOMAIN-CONTAINING PROTEIN"/>
    <property type="match status" value="1"/>
</dbReference>
<dbReference type="PANTHER" id="PTHR34823">
    <property type="entry name" value="GLCNAC-BINDING PROTEIN A"/>
    <property type="match status" value="1"/>
</dbReference>
<dbReference type="Pfam" id="PF18416">
    <property type="entry name" value="GbpA_2"/>
    <property type="match status" value="1"/>
</dbReference>
<dbReference type="Pfam" id="PF21868">
    <property type="entry name" value="GbpA_D3"/>
    <property type="match status" value="1"/>
</dbReference>
<dbReference type="Pfam" id="PF03067">
    <property type="entry name" value="LPMO_10"/>
    <property type="match status" value="1"/>
</dbReference>
<dbReference type="SUPFAM" id="SSF81296">
    <property type="entry name" value="E set domains"/>
    <property type="match status" value="1"/>
</dbReference>
<comment type="function">
    <text evidence="1">Probably interacts with GlcNAc residues. May promote attachment to both epithelial cell surfaces and chitin.</text>
</comment>
<comment type="subcellular location">
    <subcellularLocation>
        <location evidence="1">Secreted</location>
    </subcellularLocation>
</comment>
<comment type="similarity">
    <text evidence="1">Belongs to the GbpA family.</text>
</comment>
<name>GBPA_VIBVY</name>